<keyword id="KW-1283">Bacterial microcompartment</keyword>
<keyword id="KW-0846">Cobalamin</keyword>
<keyword id="KW-0170">Cobalt</keyword>
<keyword id="KW-0456">Lyase</keyword>
<keyword id="KW-1185">Reference proteome</keyword>
<evidence type="ECO:0000255" key="1">
    <source>
        <dbReference type="HAMAP-Rule" id="MF_00601"/>
    </source>
</evidence>
<protein>
    <recommendedName>
        <fullName evidence="1">Ethanolamine ammonia-lyase small subunit</fullName>
        <shortName evidence="1">EAL small subunit</shortName>
        <ecNumber evidence="1">4.3.1.7</ecNumber>
    </recommendedName>
</protein>
<sequence length="295" mass="31812">MDQKQIEEIVRSVMASMGQTAPAPSEAKCATTNCAAPVTSESCALDLGSAEAKAWIGVENPHRADVLTELRRSTVARVCTGRAGPRPRTQALLRFLADHSRSKDTVLKEVPEEWVKAQGLLEVRSEISDKNLYLTRPDMGRRLCAEAVEALKAQCVANPDVQVVISDGLSTDAITVNYEEILPPLMAGLKQAGLKVGTPFFVRYGRVKIEDQIGEILGAKVVILLVGERPGLGQSESLSCYAVYSPRMATTVEADRTCISNIHQGGTPPVEAAAVIVDLAKRMLEQKASGINMTR</sequence>
<dbReference type="EC" id="4.3.1.7" evidence="1"/>
<dbReference type="EMBL" id="CU928145">
    <property type="protein sequence ID" value="CAU98595.1"/>
    <property type="molecule type" value="Genomic_DNA"/>
</dbReference>
<dbReference type="RefSeq" id="WP_000372364.1">
    <property type="nucleotide sequence ID" value="NC_011748.1"/>
</dbReference>
<dbReference type="SMR" id="B7LCI4"/>
<dbReference type="KEGG" id="eck:EC55989_2729"/>
<dbReference type="HOGENOM" id="CLU_068224_0_0_6"/>
<dbReference type="UniPathway" id="UPA00560"/>
<dbReference type="Proteomes" id="UP000000746">
    <property type="component" value="Chromosome"/>
</dbReference>
<dbReference type="GO" id="GO:0009350">
    <property type="term" value="C:ethanolamine ammonia-lyase complex"/>
    <property type="evidence" value="ECO:0007669"/>
    <property type="project" value="UniProtKB-UniRule"/>
</dbReference>
<dbReference type="GO" id="GO:0031471">
    <property type="term" value="C:ethanolamine degradation polyhedral organelle"/>
    <property type="evidence" value="ECO:0007669"/>
    <property type="project" value="UniProtKB-UniRule"/>
</dbReference>
<dbReference type="GO" id="GO:0031419">
    <property type="term" value="F:cobalamin binding"/>
    <property type="evidence" value="ECO:0007669"/>
    <property type="project" value="UniProtKB-UniRule"/>
</dbReference>
<dbReference type="GO" id="GO:0008851">
    <property type="term" value="F:ethanolamine ammonia-lyase activity"/>
    <property type="evidence" value="ECO:0007669"/>
    <property type="project" value="UniProtKB-UniRule"/>
</dbReference>
<dbReference type="GO" id="GO:0006520">
    <property type="term" value="P:amino acid metabolic process"/>
    <property type="evidence" value="ECO:0007669"/>
    <property type="project" value="InterPro"/>
</dbReference>
<dbReference type="GO" id="GO:0046336">
    <property type="term" value="P:ethanolamine catabolic process"/>
    <property type="evidence" value="ECO:0007669"/>
    <property type="project" value="UniProtKB-UniRule"/>
</dbReference>
<dbReference type="FunFam" id="3.40.50.11240:FF:000001">
    <property type="entry name" value="Ethanolamine ammonia-lyase light chain"/>
    <property type="match status" value="1"/>
</dbReference>
<dbReference type="Gene3D" id="6.10.140.690">
    <property type="match status" value="1"/>
</dbReference>
<dbReference type="Gene3D" id="6.10.250.2060">
    <property type="match status" value="1"/>
</dbReference>
<dbReference type="Gene3D" id="3.40.50.11240">
    <property type="entry name" value="Ethanolamine ammonia-lyase light chain (EutC)"/>
    <property type="match status" value="1"/>
</dbReference>
<dbReference type="HAMAP" id="MF_00601">
    <property type="entry name" value="EutC"/>
    <property type="match status" value="1"/>
</dbReference>
<dbReference type="InterPro" id="IPR009246">
    <property type="entry name" value="EutC"/>
</dbReference>
<dbReference type="InterPro" id="IPR042251">
    <property type="entry name" value="EutC_C"/>
</dbReference>
<dbReference type="NCBIfam" id="NF003971">
    <property type="entry name" value="PRK05465.1"/>
    <property type="match status" value="1"/>
</dbReference>
<dbReference type="PANTHER" id="PTHR39330">
    <property type="entry name" value="ETHANOLAMINE AMMONIA-LYASE LIGHT CHAIN"/>
    <property type="match status" value="1"/>
</dbReference>
<dbReference type="PANTHER" id="PTHR39330:SF1">
    <property type="entry name" value="ETHANOLAMINE AMMONIA-LYASE SMALL SUBUNIT"/>
    <property type="match status" value="1"/>
</dbReference>
<dbReference type="Pfam" id="PF05985">
    <property type="entry name" value="EutC"/>
    <property type="match status" value="1"/>
</dbReference>
<dbReference type="PIRSF" id="PIRSF018982">
    <property type="entry name" value="EutC"/>
    <property type="match status" value="1"/>
</dbReference>
<feature type="chain" id="PRO_1000147052" description="Ethanolamine ammonia-lyase small subunit">
    <location>
        <begin position="1"/>
        <end position="295"/>
    </location>
</feature>
<feature type="binding site" evidence="1">
    <location>
        <position position="207"/>
    </location>
    <ligand>
        <name>adenosylcob(III)alamin</name>
        <dbReference type="ChEBI" id="CHEBI:18408"/>
    </ligand>
</feature>
<feature type="binding site" evidence="1">
    <location>
        <position position="228"/>
    </location>
    <ligand>
        <name>adenosylcob(III)alamin</name>
        <dbReference type="ChEBI" id="CHEBI:18408"/>
    </ligand>
</feature>
<feature type="binding site" evidence="1">
    <location>
        <position position="258"/>
    </location>
    <ligand>
        <name>adenosylcob(III)alamin</name>
        <dbReference type="ChEBI" id="CHEBI:18408"/>
    </ligand>
</feature>
<gene>
    <name evidence="1" type="primary">eutC</name>
    <name type="ordered locus">EC55989_2729</name>
</gene>
<organism>
    <name type="scientific">Escherichia coli (strain 55989 / EAEC)</name>
    <dbReference type="NCBI Taxonomy" id="585055"/>
    <lineage>
        <taxon>Bacteria</taxon>
        <taxon>Pseudomonadati</taxon>
        <taxon>Pseudomonadota</taxon>
        <taxon>Gammaproteobacteria</taxon>
        <taxon>Enterobacterales</taxon>
        <taxon>Enterobacteriaceae</taxon>
        <taxon>Escherichia</taxon>
    </lineage>
</organism>
<reference key="1">
    <citation type="journal article" date="2009" name="PLoS Genet.">
        <title>Organised genome dynamics in the Escherichia coli species results in highly diverse adaptive paths.</title>
        <authorList>
            <person name="Touchon M."/>
            <person name="Hoede C."/>
            <person name="Tenaillon O."/>
            <person name="Barbe V."/>
            <person name="Baeriswyl S."/>
            <person name="Bidet P."/>
            <person name="Bingen E."/>
            <person name="Bonacorsi S."/>
            <person name="Bouchier C."/>
            <person name="Bouvet O."/>
            <person name="Calteau A."/>
            <person name="Chiapello H."/>
            <person name="Clermont O."/>
            <person name="Cruveiller S."/>
            <person name="Danchin A."/>
            <person name="Diard M."/>
            <person name="Dossat C."/>
            <person name="Karoui M.E."/>
            <person name="Frapy E."/>
            <person name="Garry L."/>
            <person name="Ghigo J.M."/>
            <person name="Gilles A.M."/>
            <person name="Johnson J."/>
            <person name="Le Bouguenec C."/>
            <person name="Lescat M."/>
            <person name="Mangenot S."/>
            <person name="Martinez-Jehanne V."/>
            <person name="Matic I."/>
            <person name="Nassif X."/>
            <person name="Oztas S."/>
            <person name="Petit M.A."/>
            <person name="Pichon C."/>
            <person name="Rouy Z."/>
            <person name="Ruf C.S."/>
            <person name="Schneider D."/>
            <person name="Tourret J."/>
            <person name="Vacherie B."/>
            <person name="Vallenet D."/>
            <person name="Medigue C."/>
            <person name="Rocha E.P.C."/>
            <person name="Denamur E."/>
        </authorList>
    </citation>
    <scope>NUCLEOTIDE SEQUENCE [LARGE SCALE GENOMIC DNA]</scope>
    <source>
        <strain>55989 / EAEC</strain>
    </source>
</reference>
<accession>B7LCI4</accession>
<name>EUTC_ECO55</name>
<proteinExistence type="inferred from homology"/>
<comment type="function">
    <text evidence="1">Catalyzes the deamination of various vicinal amino-alcohols to oxo compounds. Allows this organism to utilize ethanolamine as the sole source of nitrogen and carbon in the presence of external vitamin B12.</text>
</comment>
<comment type="catalytic activity">
    <reaction evidence="1">
        <text>ethanolamine = acetaldehyde + NH4(+)</text>
        <dbReference type="Rhea" id="RHEA:15313"/>
        <dbReference type="ChEBI" id="CHEBI:15343"/>
        <dbReference type="ChEBI" id="CHEBI:28938"/>
        <dbReference type="ChEBI" id="CHEBI:57603"/>
        <dbReference type="EC" id="4.3.1.7"/>
    </reaction>
</comment>
<comment type="cofactor">
    <cofactor evidence="1">
        <name>adenosylcob(III)alamin</name>
        <dbReference type="ChEBI" id="CHEBI:18408"/>
    </cofactor>
    <text evidence="1">Binds between the large and small subunits.</text>
</comment>
<comment type="pathway">
    <text evidence="1">Amine and polyamine degradation; ethanolamine degradation.</text>
</comment>
<comment type="subunit">
    <text evidence="1">The basic unit is a heterodimer which dimerizes to form tetramers. The heterotetramers trimerize; 6 large subunits form a core ring with 6 small subunits projecting outwards.</text>
</comment>
<comment type="subcellular location">
    <subcellularLocation>
        <location evidence="1">Bacterial microcompartment</location>
    </subcellularLocation>
</comment>
<comment type="similarity">
    <text evidence="1">Belongs to the EutC family.</text>
</comment>